<dbReference type="EC" id="3.4.13.9" evidence="1"/>
<dbReference type="EMBL" id="CP001113">
    <property type="protein sequence ID" value="ACF62153.1"/>
    <property type="molecule type" value="Genomic_DNA"/>
</dbReference>
<dbReference type="RefSeq" id="WP_000444529.1">
    <property type="nucleotide sequence ID" value="NZ_CCMR01000001.1"/>
</dbReference>
<dbReference type="SMR" id="B4SZ86"/>
<dbReference type="MEROPS" id="M24.003"/>
<dbReference type="KEGG" id="see:SNSL254_A4263"/>
<dbReference type="HOGENOM" id="CLU_050675_0_0_6"/>
<dbReference type="Proteomes" id="UP000008824">
    <property type="component" value="Chromosome"/>
</dbReference>
<dbReference type="GO" id="GO:0005829">
    <property type="term" value="C:cytosol"/>
    <property type="evidence" value="ECO:0007669"/>
    <property type="project" value="TreeGrafter"/>
</dbReference>
<dbReference type="GO" id="GO:0004177">
    <property type="term" value="F:aminopeptidase activity"/>
    <property type="evidence" value="ECO:0007669"/>
    <property type="project" value="TreeGrafter"/>
</dbReference>
<dbReference type="GO" id="GO:0046872">
    <property type="term" value="F:metal ion binding"/>
    <property type="evidence" value="ECO:0007669"/>
    <property type="project" value="UniProtKB-KW"/>
</dbReference>
<dbReference type="GO" id="GO:0008235">
    <property type="term" value="F:metalloexopeptidase activity"/>
    <property type="evidence" value="ECO:0007669"/>
    <property type="project" value="UniProtKB-UniRule"/>
</dbReference>
<dbReference type="GO" id="GO:0016795">
    <property type="term" value="F:phosphoric triester hydrolase activity"/>
    <property type="evidence" value="ECO:0007669"/>
    <property type="project" value="InterPro"/>
</dbReference>
<dbReference type="GO" id="GO:0102009">
    <property type="term" value="F:proline dipeptidase activity"/>
    <property type="evidence" value="ECO:0007669"/>
    <property type="project" value="UniProtKB-EC"/>
</dbReference>
<dbReference type="GO" id="GO:0006508">
    <property type="term" value="P:proteolysis"/>
    <property type="evidence" value="ECO:0007669"/>
    <property type="project" value="UniProtKB-KW"/>
</dbReference>
<dbReference type="CDD" id="cd01087">
    <property type="entry name" value="Prolidase"/>
    <property type="match status" value="1"/>
</dbReference>
<dbReference type="FunFam" id="3.40.350.10:FF:000002">
    <property type="entry name" value="Xaa-Pro dipeptidase"/>
    <property type="match status" value="1"/>
</dbReference>
<dbReference type="FunFam" id="3.90.230.10:FF:000006">
    <property type="entry name" value="Xaa-Pro dipeptidase"/>
    <property type="match status" value="1"/>
</dbReference>
<dbReference type="Gene3D" id="3.90.230.10">
    <property type="entry name" value="Creatinase/methionine aminopeptidase superfamily"/>
    <property type="match status" value="1"/>
</dbReference>
<dbReference type="Gene3D" id="3.40.350.10">
    <property type="entry name" value="Creatinase/prolidase N-terminal domain"/>
    <property type="match status" value="1"/>
</dbReference>
<dbReference type="HAMAP" id="MF_01279">
    <property type="entry name" value="X_Pro_dipeptid"/>
    <property type="match status" value="1"/>
</dbReference>
<dbReference type="InterPro" id="IPR029149">
    <property type="entry name" value="Creatin/AminoP/Spt16_N"/>
</dbReference>
<dbReference type="InterPro" id="IPR036005">
    <property type="entry name" value="Creatinase/aminopeptidase-like"/>
</dbReference>
<dbReference type="InterPro" id="IPR048819">
    <property type="entry name" value="PepQ_N"/>
</dbReference>
<dbReference type="InterPro" id="IPR000994">
    <property type="entry name" value="Pept_M24"/>
</dbReference>
<dbReference type="InterPro" id="IPR001131">
    <property type="entry name" value="Peptidase_M24B_aminopep-P_CS"/>
</dbReference>
<dbReference type="InterPro" id="IPR052433">
    <property type="entry name" value="X-Pro_dipept-like"/>
</dbReference>
<dbReference type="InterPro" id="IPR022846">
    <property type="entry name" value="X_Pro_dipept"/>
</dbReference>
<dbReference type="NCBIfam" id="NF010133">
    <property type="entry name" value="PRK13607.1"/>
    <property type="match status" value="1"/>
</dbReference>
<dbReference type="PANTHER" id="PTHR43226">
    <property type="entry name" value="XAA-PRO AMINOPEPTIDASE 3"/>
    <property type="match status" value="1"/>
</dbReference>
<dbReference type="PANTHER" id="PTHR43226:SF8">
    <property type="entry name" value="XAA-PRO DIPEPTIDASE"/>
    <property type="match status" value="1"/>
</dbReference>
<dbReference type="Pfam" id="PF21216">
    <property type="entry name" value="PepQ_N"/>
    <property type="match status" value="1"/>
</dbReference>
<dbReference type="Pfam" id="PF00557">
    <property type="entry name" value="Peptidase_M24"/>
    <property type="match status" value="1"/>
</dbReference>
<dbReference type="SUPFAM" id="SSF55920">
    <property type="entry name" value="Creatinase/aminopeptidase"/>
    <property type="match status" value="1"/>
</dbReference>
<dbReference type="PROSITE" id="PS00491">
    <property type="entry name" value="PROLINE_PEPTIDASE"/>
    <property type="match status" value="1"/>
</dbReference>
<proteinExistence type="inferred from homology"/>
<organism>
    <name type="scientific">Salmonella newport (strain SL254)</name>
    <dbReference type="NCBI Taxonomy" id="423368"/>
    <lineage>
        <taxon>Bacteria</taxon>
        <taxon>Pseudomonadati</taxon>
        <taxon>Pseudomonadota</taxon>
        <taxon>Gammaproteobacteria</taxon>
        <taxon>Enterobacterales</taxon>
        <taxon>Enterobacteriaceae</taxon>
        <taxon>Salmonella</taxon>
    </lineage>
</organism>
<accession>B4SZ86</accession>
<evidence type="ECO:0000255" key="1">
    <source>
        <dbReference type="HAMAP-Rule" id="MF_01279"/>
    </source>
</evidence>
<comment type="function">
    <text evidence="1">Splits dipeptides with a prolyl residue in the C-terminal position.</text>
</comment>
<comment type="catalytic activity">
    <reaction evidence="1">
        <text>Xaa-L-Pro dipeptide + H2O = an L-alpha-amino acid + L-proline</text>
        <dbReference type="Rhea" id="RHEA:76407"/>
        <dbReference type="ChEBI" id="CHEBI:15377"/>
        <dbReference type="ChEBI" id="CHEBI:59869"/>
        <dbReference type="ChEBI" id="CHEBI:60039"/>
        <dbReference type="ChEBI" id="CHEBI:195196"/>
        <dbReference type="EC" id="3.4.13.9"/>
    </reaction>
</comment>
<comment type="cofactor">
    <cofactor evidence="1">
        <name>Mn(2+)</name>
        <dbReference type="ChEBI" id="CHEBI:29035"/>
    </cofactor>
    <text evidence="1">Binds 2 manganese ions per subunit.</text>
</comment>
<comment type="similarity">
    <text evidence="1">Belongs to the peptidase M24B family. Bacterial-type prolidase subfamily.</text>
</comment>
<gene>
    <name evidence="1" type="primary">pepQ</name>
    <name type="ordered locus">SNSL254_A4263</name>
</gene>
<sequence>MESLAALYKNHIVTLQERTRDVLARFKLDALLIHSGELFNVFLDDHPYPFKVNPQFKAWVPVTQVPNCWLLVDGVNKPKLWFYLPVDYWHNVEPLPTSFWTEEVEVVALPKADGIGSQLPAARGNIGYIGPVPERALQLDIAASNINPKGVIDYLHYYRAYKTDYELACMREAQKMAVSGHRAAEEAFRSGMSEFDINLAYLTATGHRDTDVPYSNIVALNEHAAVLHYTKLDHQAPSEMRSFLLDAGAEYNGYAADLTRTWSAKSDNDYAHLVKDVNDEQLALIATMKAGVSYVDYHIQFHQRIAKLLRKHQIITDMSEEAMVENDLTGPFMPHGIGHPLGLQVHDVAGFMQDDSGTHLAAPSKYPYLRCTRVLQPRMVLTIEPGIYFIESLLAPWREGPFSKHFNWQKIEALKPFGGIRIEDNVVIHENGVENMTRDLKLA</sequence>
<reference key="1">
    <citation type="journal article" date="2011" name="J. Bacteriol.">
        <title>Comparative genomics of 28 Salmonella enterica isolates: evidence for CRISPR-mediated adaptive sublineage evolution.</title>
        <authorList>
            <person name="Fricke W.F."/>
            <person name="Mammel M.K."/>
            <person name="McDermott P.F."/>
            <person name="Tartera C."/>
            <person name="White D.G."/>
            <person name="Leclerc J.E."/>
            <person name="Ravel J."/>
            <person name="Cebula T.A."/>
        </authorList>
    </citation>
    <scope>NUCLEOTIDE SEQUENCE [LARGE SCALE GENOMIC DNA]</scope>
    <source>
        <strain>SL254</strain>
    </source>
</reference>
<feature type="chain" id="PRO_1000140328" description="Xaa-Pro dipeptidase">
    <location>
        <begin position="1"/>
        <end position="443"/>
    </location>
</feature>
<feature type="binding site" evidence="1">
    <location>
        <position position="246"/>
    </location>
    <ligand>
        <name>Mn(2+)</name>
        <dbReference type="ChEBI" id="CHEBI:29035"/>
        <label>2</label>
    </ligand>
</feature>
<feature type="binding site" evidence="1">
    <location>
        <position position="257"/>
    </location>
    <ligand>
        <name>Mn(2+)</name>
        <dbReference type="ChEBI" id="CHEBI:29035"/>
        <label>1</label>
    </ligand>
</feature>
<feature type="binding site" evidence="1">
    <location>
        <position position="257"/>
    </location>
    <ligand>
        <name>Mn(2+)</name>
        <dbReference type="ChEBI" id="CHEBI:29035"/>
        <label>2</label>
    </ligand>
</feature>
<feature type="binding site" evidence="1">
    <location>
        <position position="339"/>
    </location>
    <ligand>
        <name>Mn(2+)</name>
        <dbReference type="ChEBI" id="CHEBI:29035"/>
        <label>1</label>
    </ligand>
</feature>
<feature type="binding site" evidence="1">
    <location>
        <position position="384"/>
    </location>
    <ligand>
        <name>Mn(2+)</name>
        <dbReference type="ChEBI" id="CHEBI:29035"/>
        <label>1</label>
    </ligand>
</feature>
<feature type="binding site" evidence="1">
    <location>
        <position position="423"/>
    </location>
    <ligand>
        <name>Mn(2+)</name>
        <dbReference type="ChEBI" id="CHEBI:29035"/>
        <label>1</label>
    </ligand>
</feature>
<feature type="binding site" evidence="1">
    <location>
        <position position="423"/>
    </location>
    <ligand>
        <name>Mn(2+)</name>
        <dbReference type="ChEBI" id="CHEBI:29035"/>
        <label>2</label>
    </ligand>
</feature>
<keyword id="KW-0224">Dipeptidase</keyword>
<keyword id="KW-0378">Hydrolase</keyword>
<keyword id="KW-0464">Manganese</keyword>
<keyword id="KW-0479">Metal-binding</keyword>
<keyword id="KW-0482">Metalloprotease</keyword>
<keyword id="KW-0645">Protease</keyword>
<protein>
    <recommendedName>
        <fullName evidence="1">Xaa-Pro dipeptidase</fullName>
        <shortName evidence="1">X-Pro dipeptidase</shortName>
        <ecNumber evidence="1">3.4.13.9</ecNumber>
    </recommendedName>
    <alternativeName>
        <fullName evidence="1">Imidodipeptidase</fullName>
    </alternativeName>
    <alternativeName>
        <fullName evidence="1">Proline dipeptidase</fullName>
        <shortName evidence="1">Prolidase</shortName>
    </alternativeName>
</protein>
<name>PEPQ_SALNS</name>